<comment type="catalytic activity">
    <reaction evidence="1">
        <text>urea + 2 H2O + H(+) = hydrogencarbonate + 2 NH4(+)</text>
        <dbReference type="Rhea" id="RHEA:20557"/>
        <dbReference type="ChEBI" id="CHEBI:15377"/>
        <dbReference type="ChEBI" id="CHEBI:15378"/>
        <dbReference type="ChEBI" id="CHEBI:16199"/>
        <dbReference type="ChEBI" id="CHEBI:17544"/>
        <dbReference type="ChEBI" id="CHEBI:28938"/>
        <dbReference type="EC" id="3.5.1.5"/>
    </reaction>
</comment>
<comment type="pathway">
    <text evidence="1">Nitrogen metabolism; urea degradation; CO(2) and NH(3) from urea (urease route): step 1/1.</text>
</comment>
<comment type="subunit">
    <text evidence="1">Heterotrimer of UreA (gamma), UreB (beta) and UreC (alpha) subunits. Three heterotrimers associate to form the active enzyme.</text>
</comment>
<comment type="subcellular location">
    <subcellularLocation>
        <location evidence="1">Cytoplasm</location>
    </subcellularLocation>
</comment>
<comment type="similarity">
    <text evidence="1">Belongs to the urease gamma subunit family.</text>
</comment>
<dbReference type="EC" id="3.5.1.5" evidence="1"/>
<dbReference type="EMBL" id="AE016853">
    <property type="protein sequence ID" value="AAO58320.1"/>
    <property type="molecule type" value="Genomic_DNA"/>
</dbReference>
<dbReference type="RefSeq" id="NP_794625.1">
    <property type="nucleotide sequence ID" value="NC_004578.1"/>
</dbReference>
<dbReference type="RefSeq" id="WP_005763104.1">
    <property type="nucleotide sequence ID" value="NC_004578.1"/>
</dbReference>
<dbReference type="SMR" id="Q87VP4"/>
<dbReference type="STRING" id="223283.PSPTO_4891"/>
<dbReference type="GeneID" id="1186574"/>
<dbReference type="KEGG" id="pst:PSPTO_4891"/>
<dbReference type="PATRIC" id="fig|223283.9.peg.5004"/>
<dbReference type="eggNOG" id="COG0831">
    <property type="taxonomic scope" value="Bacteria"/>
</dbReference>
<dbReference type="HOGENOM" id="CLU_145825_1_0_6"/>
<dbReference type="OrthoDB" id="9797217at2"/>
<dbReference type="PhylomeDB" id="Q87VP4"/>
<dbReference type="UniPathway" id="UPA00258">
    <property type="reaction ID" value="UER00370"/>
</dbReference>
<dbReference type="Proteomes" id="UP000002515">
    <property type="component" value="Chromosome"/>
</dbReference>
<dbReference type="GO" id="GO:0005737">
    <property type="term" value="C:cytoplasm"/>
    <property type="evidence" value="ECO:0007669"/>
    <property type="project" value="UniProtKB-SubCell"/>
</dbReference>
<dbReference type="GO" id="GO:0016151">
    <property type="term" value="F:nickel cation binding"/>
    <property type="evidence" value="ECO:0007669"/>
    <property type="project" value="InterPro"/>
</dbReference>
<dbReference type="GO" id="GO:0009039">
    <property type="term" value="F:urease activity"/>
    <property type="evidence" value="ECO:0007669"/>
    <property type="project" value="UniProtKB-UniRule"/>
</dbReference>
<dbReference type="GO" id="GO:0043419">
    <property type="term" value="P:urea catabolic process"/>
    <property type="evidence" value="ECO:0007669"/>
    <property type="project" value="UniProtKB-UniRule"/>
</dbReference>
<dbReference type="CDD" id="cd00390">
    <property type="entry name" value="Urease_gamma"/>
    <property type="match status" value="1"/>
</dbReference>
<dbReference type="Gene3D" id="3.30.280.10">
    <property type="entry name" value="Urease, gamma-like subunit"/>
    <property type="match status" value="1"/>
</dbReference>
<dbReference type="HAMAP" id="MF_00739">
    <property type="entry name" value="Urease_gamma"/>
    <property type="match status" value="1"/>
</dbReference>
<dbReference type="InterPro" id="IPR012010">
    <property type="entry name" value="Urease_gamma"/>
</dbReference>
<dbReference type="InterPro" id="IPR002026">
    <property type="entry name" value="Urease_gamma/gamma-beta_su"/>
</dbReference>
<dbReference type="InterPro" id="IPR036463">
    <property type="entry name" value="Urease_gamma_sf"/>
</dbReference>
<dbReference type="InterPro" id="IPR050069">
    <property type="entry name" value="Urease_subunit"/>
</dbReference>
<dbReference type="NCBIfam" id="NF009712">
    <property type="entry name" value="PRK13241.1"/>
    <property type="match status" value="1"/>
</dbReference>
<dbReference type="NCBIfam" id="TIGR00193">
    <property type="entry name" value="urease_gam"/>
    <property type="match status" value="1"/>
</dbReference>
<dbReference type="PANTHER" id="PTHR33569">
    <property type="entry name" value="UREASE"/>
    <property type="match status" value="1"/>
</dbReference>
<dbReference type="PANTHER" id="PTHR33569:SF1">
    <property type="entry name" value="UREASE"/>
    <property type="match status" value="1"/>
</dbReference>
<dbReference type="Pfam" id="PF00547">
    <property type="entry name" value="Urease_gamma"/>
    <property type="match status" value="1"/>
</dbReference>
<dbReference type="PIRSF" id="PIRSF001223">
    <property type="entry name" value="Urease_gamma"/>
    <property type="match status" value="1"/>
</dbReference>
<dbReference type="SUPFAM" id="SSF54111">
    <property type="entry name" value="Urease, gamma-subunit"/>
    <property type="match status" value="1"/>
</dbReference>
<proteinExistence type="inferred from homology"/>
<accession>Q87VP4</accession>
<evidence type="ECO:0000255" key="1">
    <source>
        <dbReference type="HAMAP-Rule" id="MF_00739"/>
    </source>
</evidence>
<reference key="1">
    <citation type="journal article" date="2003" name="Proc. Natl. Acad. Sci. U.S.A.">
        <title>The complete genome sequence of the Arabidopsis and tomato pathogen Pseudomonas syringae pv. tomato DC3000.</title>
        <authorList>
            <person name="Buell C.R."/>
            <person name="Joardar V."/>
            <person name="Lindeberg M."/>
            <person name="Selengut J."/>
            <person name="Paulsen I.T."/>
            <person name="Gwinn M.L."/>
            <person name="Dodson R.J."/>
            <person name="DeBoy R.T."/>
            <person name="Durkin A.S."/>
            <person name="Kolonay J.F."/>
            <person name="Madupu R."/>
            <person name="Daugherty S.C."/>
            <person name="Brinkac L.M."/>
            <person name="Beanan M.J."/>
            <person name="Haft D.H."/>
            <person name="Nelson W.C."/>
            <person name="Davidsen T.M."/>
            <person name="Zafar N."/>
            <person name="Zhou L."/>
            <person name="Liu J."/>
            <person name="Yuan Q."/>
            <person name="Khouri H.M."/>
            <person name="Fedorova N.B."/>
            <person name="Tran B."/>
            <person name="Russell D."/>
            <person name="Berry K.J."/>
            <person name="Utterback T.R."/>
            <person name="Van Aken S.E."/>
            <person name="Feldblyum T.V."/>
            <person name="D'Ascenzo M."/>
            <person name="Deng W.-L."/>
            <person name="Ramos A.R."/>
            <person name="Alfano J.R."/>
            <person name="Cartinhour S."/>
            <person name="Chatterjee A.K."/>
            <person name="Delaney T.P."/>
            <person name="Lazarowitz S.G."/>
            <person name="Martin G.B."/>
            <person name="Schneider D.J."/>
            <person name="Tang X."/>
            <person name="Bender C.L."/>
            <person name="White O."/>
            <person name="Fraser C.M."/>
            <person name="Collmer A."/>
        </authorList>
    </citation>
    <scope>NUCLEOTIDE SEQUENCE [LARGE SCALE GENOMIC DNA]</scope>
    <source>
        <strain>ATCC BAA-871 / DC3000</strain>
    </source>
</reference>
<feature type="chain" id="PRO_0000098030" description="Urease subunit gamma">
    <location>
        <begin position="1"/>
        <end position="100"/>
    </location>
</feature>
<keyword id="KW-0963">Cytoplasm</keyword>
<keyword id="KW-0378">Hydrolase</keyword>
<keyword id="KW-1185">Reference proteome</keyword>
<gene>
    <name evidence="1" type="primary">ureA</name>
    <name type="ordered locus">PSPTO_4891</name>
</gene>
<organism>
    <name type="scientific">Pseudomonas syringae pv. tomato (strain ATCC BAA-871 / DC3000)</name>
    <dbReference type="NCBI Taxonomy" id="223283"/>
    <lineage>
        <taxon>Bacteria</taxon>
        <taxon>Pseudomonadati</taxon>
        <taxon>Pseudomonadota</taxon>
        <taxon>Gammaproteobacteria</taxon>
        <taxon>Pseudomonadales</taxon>
        <taxon>Pseudomonadaceae</taxon>
        <taxon>Pseudomonas</taxon>
    </lineage>
</organism>
<protein>
    <recommendedName>
        <fullName evidence="1">Urease subunit gamma</fullName>
        <ecNumber evidence="1">3.5.1.5</ecNumber>
    </recommendedName>
    <alternativeName>
        <fullName evidence="1">Urea amidohydrolase subunit gamma</fullName>
    </alternativeName>
</protein>
<sequence length="100" mass="11042">MDLTPREKDKMLIFTAGLVAERRLARGVKLNYPEAMAYISAALLEGARDGQTVADLMHYGTTLLTRDQVMEGIPEMIPEIQVEATFPDGTKLVTVHQPIA</sequence>
<name>URE3_PSESM</name>